<dbReference type="EC" id="4.3.2.1" evidence="1"/>
<dbReference type="EMBL" id="CP001649">
    <property type="protein sequence ID" value="ACS79848.1"/>
    <property type="molecule type" value="Genomic_DNA"/>
</dbReference>
<dbReference type="RefSeq" id="WP_015851664.1">
    <property type="nucleotide sequence ID" value="NC_012881.1"/>
</dbReference>
<dbReference type="SMR" id="C6BTR8"/>
<dbReference type="STRING" id="526222.Desal_1786"/>
<dbReference type="KEGG" id="dsa:Desal_1786"/>
<dbReference type="eggNOG" id="COG0165">
    <property type="taxonomic scope" value="Bacteria"/>
</dbReference>
<dbReference type="HOGENOM" id="CLU_027272_2_3_7"/>
<dbReference type="OrthoDB" id="9769623at2"/>
<dbReference type="UniPathway" id="UPA00068">
    <property type="reaction ID" value="UER00114"/>
</dbReference>
<dbReference type="Proteomes" id="UP000002601">
    <property type="component" value="Chromosome"/>
</dbReference>
<dbReference type="GO" id="GO:0005829">
    <property type="term" value="C:cytosol"/>
    <property type="evidence" value="ECO:0007669"/>
    <property type="project" value="TreeGrafter"/>
</dbReference>
<dbReference type="GO" id="GO:0004056">
    <property type="term" value="F:argininosuccinate lyase activity"/>
    <property type="evidence" value="ECO:0007669"/>
    <property type="project" value="UniProtKB-UniRule"/>
</dbReference>
<dbReference type="GO" id="GO:0042450">
    <property type="term" value="P:arginine biosynthetic process via ornithine"/>
    <property type="evidence" value="ECO:0007669"/>
    <property type="project" value="InterPro"/>
</dbReference>
<dbReference type="GO" id="GO:0006526">
    <property type="term" value="P:L-arginine biosynthetic process"/>
    <property type="evidence" value="ECO:0007669"/>
    <property type="project" value="UniProtKB-UniRule"/>
</dbReference>
<dbReference type="CDD" id="cd01359">
    <property type="entry name" value="Argininosuccinate_lyase"/>
    <property type="match status" value="1"/>
</dbReference>
<dbReference type="FunFam" id="1.10.275.10:FF:000002">
    <property type="entry name" value="Argininosuccinate lyase"/>
    <property type="match status" value="1"/>
</dbReference>
<dbReference type="FunFam" id="1.10.40.30:FF:000001">
    <property type="entry name" value="Argininosuccinate lyase"/>
    <property type="match status" value="1"/>
</dbReference>
<dbReference type="FunFam" id="1.20.200.10:FF:000015">
    <property type="entry name" value="argininosuccinate lyase isoform X2"/>
    <property type="match status" value="1"/>
</dbReference>
<dbReference type="Gene3D" id="1.10.40.30">
    <property type="entry name" value="Fumarase/aspartase (C-terminal domain)"/>
    <property type="match status" value="1"/>
</dbReference>
<dbReference type="Gene3D" id="1.20.200.10">
    <property type="entry name" value="Fumarase/aspartase (Central domain)"/>
    <property type="match status" value="1"/>
</dbReference>
<dbReference type="Gene3D" id="1.10.275.10">
    <property type="entry name" value="Fumarase/aspartase (N-terminal domain)"/>
    <property type="match status" value="1"/>
</dbReference>
<dbReference type="HAMAP" id="MF_00006">
    <property type="entry name" value="Arg_succ_lyase"/>
    <property type="match status" value="1"/>
</dbReference>
<dbReference type="InterPro" id="IPR029419">
    <property type="entry name" value="Arg_succ_lyase_C"/>
</dbReference>
<dbReference type="InterPro" id="IPR009049">
    <property type="entry name" value="Argininosuccinate_lyase"/>
</dbReference>
<dbReference type="InterPro" id="IPR024083">
    <property type="entry name" value="Fumarase/histidase_N"/>
</dbReference>
<dbReference type="InterPro" id="IPR020557">
    <property type="entry name" value="Fumarate_lyase_CS"/>
</dbReference>
<dbReference type="InterPro" id="IPR000362">
    <property type="entry name" value="Fumarate_lyase_fam"/>
</dbReference>
<dbReference type="InterPro" id="IPR022761">
    <property type="entry name" value="Fumarate_lyase_N"/>
</dbReference>
<dbReference type="InterPro" id="IPR008948">
    <property type="entry name" value="L-Aspartase-like"/>
</dbReference>
<dbReference type="NCBIfam" id="TIGR00838">
    <property type="entry name" value="argH"/>
    <property type="match status" value="1"/>
</dbReference>
<dbReference type="PANTHER" id="PTHR43814">
    <property type="entry name" value="ARGININOSUCCINATE LYASE"/>
    <property type="match status" value="1"/>
</dbReference>
<dbReference type="PANTHER" id="PTHR43814:SF1">
    <property type="entry name" value="ARGININOSUCCINATE LYASE"/>
    <property type="match status" value="1"/>
</dbReference>
<dbReference type="Pfam" id="PF14698">
    <property type="entry name" value="ASL_C2"/>
    <property type="match status" value="1"/>
</dbReference>
<dbReference type="Pfam" id="PF00206">
    <property type="entry name" value="Lyase_1"/>
    <property type="match status" value="1"/>
</dbReference>
<dbReference type="PRINTS" id="PR00145">
    <property type="entry name" value="ARGSUCLYASE"/>
</dbReference>
<dbReference type="PRINTS" id="PR00149">
    <property type="entry name" value="FUMRATELYASE"/>
</dbReference>
<dbReference type="SUPFAM" id="SSF48557">
    <property type="entry name" value="L-aspartase-like"/>
    <property type="match status" value="1"/>
</dbReference>
<dbReference type="PROSITE" id="PS00163">
    <property type="entry name" value="FUMARATE_LYASES"/>
    <property type="match status" value="1"/>
</dbReference>
<keyword id="KW-0028">Amino-acid biosynthesis</keyword>
<keyword id="KW-0055">Arginine biosynthesis</keyword>
<keyword id="KW-0963">Cytoplasm</keyword>
<keyword id="KW-0456">Lyase</keyword>
<keyword id="KW-1185">Reference proteome</keyword>
<evidence type="ECO:0000255" key="1">
    <source>
        <dbReference type="HAMAP-Rule" id="MF_00006"/>
    </source>
</evidence>
<gene>
    <name evidence="1" type="primary">argH</name>
    <name type="ordered locus">Desal_1786</name>
</gene>
<sequence>MADNKLWGGRFAAKTAQSVEDYTESVSYDQNLYREDISGSQAHAKMLAEQGVLTAEEAEILVKGLDQVLEEIESGKFEWKKEMEDLHMNIESRLTEIVGPVGGKLHTGRSRNDQVATDFRLHVLRSLEAWKTALEKLIASFTAKADANREVLLPGYTHLQPAQPVSLAHHMLAYAWMFKRDHSRVVDCINRANVCPLGAAALAGTTYPLKPATSAKYLGMEDTFRNSLDAVSDRDFVMEAMFTGSLIMTHLSRICEELIIWANPCFGFIKLPDEFSTGSSIMPQKKNPDVCELMRGKTGRVYGDLFSLMTTCKGLPLAYNRDMQEDKEPFFDCDKTVHASVVIMADMMDAMGFNPANMESALKKGFLNATELADYLVGKGIPFREAHHITGSAVAKAEAESRGLEDMSLEELKTFSDKIEEDVFEVLSYEAAVRRRVSPGSTGPESVDSQIAELKAWLKK</sequence>
<proteinExistence type="inferred from homology"/>
<name>ARLY_MARSD</name>
<feature type="chain" id="PRO_1000201695" description="Argininosuccinate lyase">
    <location>
        <begin position="1"/>
        <end position="460"/>
    </location>
</feature>
<organism>
    <name type="scientific">Maridesulfovibrio salexigens (strain ATCC 14822 / DSM 2638 / NCIMB 8403 / VKM B-1763)</name>
    <name type="common">Desulfovibrio salexigens</name>
    <dbReference type="NCBI Taxonomy" id="526222"/>
    <lineage>
        <taxon>Bacteria</taxon>
        <taxon>Pseudomonadati</taxon>
        <taxon>Thermodesulfobacteriota</taxon>
        <taxon>Desulfovibrionia</taxon>
        <taxon>Desulfovibrionales</taxon>
        <taxon>Desulfovibrionaceae</taxon>
        <taxon>Maridesulfovibrio</taxon>
    </lineage>
</organism>
<reference key="1">
    <citation type="submission" date="2009-06" db="EMBL/GenBank/DDBJ databases">
        <title>Complete sequence of Desulfovibrio salexigens DSM 2638.</title>
        <authorList>
            <consortium name="US DOE Joint Genome Institute"/>
            <person name="Lucas S."/>
            <person name="Copeland A."/>
            <person name="Lapidus A."/>
            <person name="Glavina del Rio T."/>
            <person name="Tice H."/>
            <person name="Bruce D."/>
            <person name="Goodwin L."/>
            <person name="Pitluck S."/>
            <person name="Munk A.C."/>
            <person name="Brettin T."/>
            <person name="Detter J.C."/>
            <person name="Han C."/>
            <person name="Tapia R."/>
            <person name="Larimer F."/>
            <person name="Land M."/>
            <person name="Hauser L."/>
            <person name="Kyrpides N."/>
            <person name="Anderson I."/>
            <person name="Wall J.D."/>
            <person name="Arkin A.P."/>
            <person name="Dehal P."/>
            <person name="Chivian D."/>
            <person name="Giles B."/>
            <person name="Hazen T.C."/>
        </authorList>
    </citation>
    <scope>NUCLEOTIDE SEQUENCE [LARGE SCALE GENOMIC DNA]</scope>
    <source>
        <strain>ATCC 14822 / DSM 2638 / NCIMB 8403 / VKM B-1763</strain>
    </source>
</reference>
<protein>
    <recommendedName>
        <fullName evidence="1">Argininosuccinate lyase</fullName>
        <shortName evidence="1">ASAL</shortName>
        <ecNumber evidence="1">4.3.2.1</ecNumber>
    </recommendedName>
    <alternativeName>
        <fullName evidence="1">Arginosuccinase</fullName>
    </alternativeName>
</protein>
<comment type="catalytic activity">
    <reaction evidence="1">
        <text>2-(N(omega)-L-arginino)succinate = fumarate + L-arginine</text>
        <dbReference type="Rhea" id="RHEA:24020"/>
        <dbReference type="ChEBI" id="CHEBI:29806"/>
        <dbReference type="ChEBI" id="CHEBI:32682"/>
        <dbReference type="ChEBI" id="CHEBI:57472"/>
        <dbReference type="EC" id="4.3.2.1"/>
    </reaction>
</comment>
<comment type="pathway">
    <text evidence="1">Amino-acid biosynthesis; L-arginine biosynthesis; L-arginine from L-ornithine and carbamoyl phosphate: step 3/3.</text>
</comment>
<comment type="subcellular location">
    <subcellularLocation>
        <location evidence="1">Cytoplasm</location>
    </subcellularLocation>
</comment>
<comment type="similarity">
    <text evidence="1">Belongs to the lyase 1 family. Argininosuccinate lyase subfamily.</text>
</comment>
<accession>C6BTR8</accession>